<keyword id="KW-0067">ATP-binding</keyword>
<keyword id="KW-0413">Isomerase</keyword>
<keyword id="KW-1017">Isopeptide bond</keyword>
<keyword id="KW-0547">Nucleotide-binding</keyword>
<keyword id="KW-1185">Reference proteome</keyword>
<keyword id="KW-0799">Topoisomerase</keyword>
<keyword id="KW-0832">Ubl conjugation</keyword>
<evidence type="ECO:0000255" key="1">
    <source>
        <dbReference type="PROSITE-ProRule" id="PRU00995"/>
    </source>
</evidence>
<evidence type="ECO:0000256" key="2">
    <source>
        <dbReference type="SAM" id="MobiDB-lite"/>
    </source>
</evidence>
<evidence type="ECO:0000269" key="3">
    <source>
    </source>
</evidence>
<evidence type="ECO:0000269" key="4">
    <source>
    </source>
</evidence>
<evidence type="ECO:0000303" key="5">
    <source>
    </source>
</evidence>
<evidence type="ECO:0000305" key="6"/>
<evidence type="ECO:0000305" key="7">
    <source>
    </source>
</evidence>
<accession>A0QPN2</accession>
<accession>I7F5Q2</accession>
<sequence>MSDPASTIPPAHHPTFWRERAVSYTAADITELDDVQHTRLRPAVNLGLDVLNTALREIVDNAIEEVADPGHGGSTVTITLHADGSVSVADDGRGLPVDTDPTTGKNGIVKTLGTARAGGKFSAHKDATSTGAGLNGIGAAAAVFISARTDVTVRRDGKTFLQSFGRGYPGVFEGKEFDPEAPFTRNDTQKLRGVSNRKPDLHGTEVRILFDPAIAPDSTLDIGEVLLRAHAAARMSPGVHLVVVDEGWPGEEVPPAVLEPFSGPWGTDTLLDLMCTAAGTPLPEVRAVVEGRGEYTTGRGPTPFRWSLTAGPAEPATVAAFCNTVRTPGGGSHLTAAIKGLSEALAERASRMRDLGLAKNEEGPEPQDFAAVTALAVDTRAPDVAWDSQAKTAVSSRSLNLAMAPDVARSVTIWAANPANADTVTLWSKLALESARARRSAEGAKARARAASKAKGLGTNLSLPPKLLPSRESGRGSGAELFLCEGDSALGTIKAARDATFQAAFPLKGKPPNVYGFPLNKARAKDEFDAIERILGCGVRDHCDPELCRYDRILFASDADPDGGNINSSLISMFLDFYRPLVEAGMVYVTMPPLFVVKAGDERIYCQDESERDAAVAQLKASSNRRVEVQRNKGLGEMDADDFWNTVLDPQRRTVIRVRPDESEKKLHHTLFGGPPEGRRTWMADVAARVDTSALDLT</sequence>
<protein>
    <recommendedName>
        <fullName evidence="5">Topoisomerase subunit TopoN</fullName>
        <ecNumber evidence="3">5.6.2.2</ecNumber>
    </recommendedName>
    <alternativeName>
        <fullName>DNA gyrase subunit B-like protein MSMEG_0457/MSMEI_0444</fullName>
    </alternativeName>
</protein>
<comment type="function">
    <text evidence="3">Catalyzes the relaxation of negatively supercoiled DNA in the presence of ATP or dATP but not other nucleotides. Individual subunits have no activity. Not able to negatively supercoil DNA, it can however introduce positive supercoils in DNA. Relaxes positive supercoils in an ATP-dependent manner. Catenates and decatenates DNA. Generates dsDNA breaks in the presence of the quinolone antibiotic ciprofloxacin, showing it is a topoisomerase.</text>
</comment>
<comment type="catalytic activity">
    <reaction evidence="3">
        <text>ATP-dependent breakage, passage and rejoining of double-stranded DNA.</text>
        <dbReference type="EC" id="5.6.2.2"/>
    </reaction>
</comment>
<comment type="cofactor">
    <cofactor evidence="3">
        <name>Mg(2+)</name>
        <dbReference type="ChEBI" id="CHEBI:18420"/>
    </cofactor>
    <text evidence="3">Maximal DNA relaxation at 5.0 mM MgCl(2).</text>
</comment>
<comment type="activity regulation">
    <text evidence="3">Inhibited by quinolone antibiotic ciprofloxacin and coumarin antibiotic novobiocin, but at much higher concentrations than is usual for DNA gyrase/topoisomerase.</text>
</comment>
<comment type="subunit">
    <text evidence="3">A complex of TopoN and TopoM, possibly a heterotetramer.</text>
</comment>
<comment type="similarity">
    <text evidence="6">Belongs to the type II topoisomerase family.</text>
</comment>
<comment type="sequence caution" evidence="7">
    <conflict type="erroneous initiation">
        <sequence resource="EMBL-CDS" id="ABK70935"/>
    </conflict>
    <text>Truncated N-terminus.</text>
</comment>
<comment type="sequence caution" evidence="7">
    <conflict type="erroneous initiation">
        <sequence resource="EMBL-CDS" id="AFP36925"/>
    </conflict>
    <text>Truncated N-terminus.</text>
</comment>
<dbReference type="EC" id="5.6.2.2" evidence="3"/>
<dbReference type="EMBL" id="CP000480">
    <property type="protein sequence ID" value="ABK70935.1"/>
    <property type="status" value="ALT_INIT"/>
    <property type="molecule type" value="Genomic_DNA"/>
</dbReference>
<dbReference type="EMBL" id="CP001663">
    <property type="protein sequence ID" value="AFP36925.1"/>
    <property type="status" value="ALT_INIT"/>
    <property type="molecule type" value="Genomic_DNA"/>
</dbReference>
<dbReference type="RefSeq" id="YP_884870.1">
    <property type="nucleotide sequence ID" value="NC_008596.1"/>
</dbReference>
<dbReference type="SMR" id="A0QPN2"/>
<dbReference type="STRING" id="246196.MSMEG_0457"/>
<dbReference type="PaxDb" id="246196-MSMEI_0444"/>
<dbReference type="KEGG" id="msg:MSMEI_0444"/>
<dbReference type="KEGG" id="msm:MSMEG_0457"/>
<dbReference type="PATRIC" id="fig|246196.19.peg.452"/>
<dbReference type="eggNOG" id="COG0187">
    <property type="taxonomic scope" value="Bacteria"/>
</dbReference>
<dbReference type="OrthoDB" id="9802808at2"/>
<dbReference type="Proteomes" id="UP000000757">
    <property type="component" value="Chromosome"/>
</dbReference>
<dbReference type="Proteomes" id="UP000006158">
    <property type="component" value="Chromosome"/>
</dbReference>
<dbReference type="GO" id="GO:0005524">
    <property type="term" value="F:ATP binding"/>
    <property type="evidence" value="ECO:0007669"/>
    <property type="project" value="UniProtKB-KW"/>
</dbReference>
<dbReference type="GO" id="GO:0003677">
    <property type="term" value="F:DNA binding"/>
    <property type="evidence" value="ECO:0007669"/>
    <property type="project" value="InterPro"/>
</dbReference>
<dbReference type="GO" id="GO:0034335">
    <property type="term" value="F:DNA negative supercoiling activity"/>
    <property type="evidence" value="ECO:0007669"/>
    <property type="project" value="UniProtKB-ARBA"/>
</dbReference>
<dbReference type="GO" id="GO:0006265">
    <property type="term" value="P:DNA topological change"/>
    <property type="evidence" value="ECO:0007669"/>
    <property type="project" value="InterPro"/>
</dbReference>
<dbReference type="Gene3D" id="3.30.230.10">
    <property type="match status" value="1"/>
</dbReference>
<dbReference type="Gene3D" id="3.40.50.670">
    <property type="match status" value="1"/>
</dbReference>
<dbReference type="Gene3D" id="3.30.565.10">
    <property type="entry name" value="Histidine kinase-like ATPase, C-terminal domain"/>
    <property type="match status" value="1"/>
</dbReference>
<dbReference type="InterPro" id="IPR002288">
    <property type="entry name" value="DNA_gyrase_B_C"/>
</dbReference>
<dbReference type="InterPro" id="IPR036890">
    <property type="entry name" value="HATPase_C_sf"/>
</dbReference>
<dbReference type="InterPro" id="IPR020568">
    <property type="entry name" value="Ribosomal_Su5_D2-typ_SF"/>
</dbReference>
<dbReference type="InterPro" id="IPR014721">
    <property type="entry name" value="Ribsml_uS5_D2-typ_fold_subgr"/>
</dbReference>
<dbReference type="InterPro" id="IPR001241">
    <property type="entry name" value="Topo_IIA"/>
</dbReference>
<dbReference type="InterPro" id="IPR013760">
    <property type="entry name" value="Topo_IIA-like_dom_sf"/>
</dbReference>
<dbReference type="InterPro" id="IPR013759">
    <property type="entry name" value="Topo_IIA_B_C"/>
</dbReference>
<dbReference type="InterPro" id="IPR013506">
    <property type="entry name" value="Topo_IIA_bsu_dom2"/>
</dbReference>
<dbReference type="InterPro" id="IPR018522">
    <property type="entry name" value="TopoIIA_CS"/>
</dbReference>
<dbReference type="InterPro" id="IPR006171">
    <property type="entry name" value="TOPRIM_dom"/>
</dbReference>
<dbReference type="PANTHER" id="PTHR45866">
    <property type="entry name" value="DNA GYRASE/TOPOISOMERASE SUBUNIT B"/>
    <property type="match status" value="1"/>
</dbReference>
<dbReference type="PANTHER" id="PTHR45866:SF2">
    <property type="entry name" value="DNA TOPOISOMERASE (ATP-HYDROLYZING)"/>
    <property type="match status" value="1"/>
</dbReference>
<dbReference type="Pfam" id="PF00204">
    <property type="entry name" value="DNA_gyraseB"/>
    <property type="match status" value="1"/>
</dbReference>
<dbReference type="Pfam" id="PF00986">
    <property type="entry name" value="DNA_gyraseB_C"/>
    <property type="match status" value="1"/>
</dbReference>
<dbReference type="Pfam" id="PF02518">
    <property type="entry name" value="HATPase_c"/>
    <property type="match status" value="1"/>
</dbReference>
<dbReference type="Pfam" id="PF01751">
    <property type="entry name" value="Toprim"/>
    <property type="match status" value="1"/>
</dbReference>
<dbReference type="PRINTS" id="PR00418">
    <property type="entry name" value="TPI2FAMILY"/>
</dbReference>
<dbReference type="SMART" id="SM00387">
    <property type="entry name" value="HATPase_c"/>
    <property type="match status" value="1"/>
</dbReference>
<dbReference type="SMART" id="SM00433">
    <property type="entry name" value="TOP2c"/>
    <property type="match status" value="1"/>
</dbReference>
<dbReference type="SUPFAM" id="SSF55874">
    <property type="entry name" value="ATPase domain of HSP90 chaperone/DNA topoisomerase II/histidine kinase"/>
    <property type="match status" value="1"/>
</dbReference>
<dbReference type="SUPFAM" id="SSF54211">
    <property type="entry name" value="Ribosomal protein S5 domain 2-like"/>
    <property type="match status" value="1"/>
</dbReference>
<dbReference type="SUPFAM" id="SSF56719">
    <property type="entry name" value="Type II DNA topoisomerase"/>
    <property type="match status" value="1"/>
</dbReference>
<dbReference type="PROSITE" id="PS00177">
    <property type="entry name" value="TOPOISOMERASE_II"/>
    <property type="match status" value="1"/>
</dbReference>
<dbReference type="PROSITE" id="PS50880">
    <property type="entry name" value="TOPRIM"/>
    <property type="match status" value="1"/>
</dbReference>
<reference key="1">
    <citation type="submission" date="2006-10" db="EMBL/GenBank/DDBJ databases">
        <authorList>
            <person name="Fleischmann R.D."/>
            <person name="Dodson R.J."/>
            <person name="Haft D.H."/>
            <person name="Merkel J.S."/>
            <person name="Nelson W.C."/>
            <person name="Fraser C.M."/>
        </authorList>
    </citation>
    <scope>NUCLEOTIDE SEQUENCE [LARGE SCALE GENOMIC DNA]</scope>
    <source>
        <strain>ATCC 700084 / mc(2)155</strain>
    </source>
</reference>
<reference key="2">
    <citation type="journal article" date="2007" name="Genome Biol.">
        <title>Interrupted coding sequences in Mycobacterium smegmatis: authentic mutations or sequencing errors?</title>
        <authorList>
            <person name="Deshayes C."/>
            <person name="Perrodou E."/>
            <person name="Gallien S."/>
            <person name="Euphrasie D."/>
            <person name="Schaeffer C."/>
            <person name="Van-Dorsselaer A."/>
            <person name="Poch O."/>
            <person name="Lecompte O."/>
            <person name="Reyrat J.-M."/>
        </authorList>
    </citation>
    <scope>NUCLEOTIDE SEQUENCE [LARGE SCALE GENOMIC DNA]</scope>
    <source>
        <strain>ATCC 700084 / mc(2)155</strain>
    </source>
</reference>
<reference key="3">
    <citation type="journal article" date="2009" name="Genome Res.">
        <title>Ortho-proteogenomics: multiple proteomes investigation through orthology and a new MS-based protocol.</title>
        <authorList>
            <person name="Gallien S."/>
            <person name="Perrodou E."/>
            <person name="Carapito C."/>
            <person name="Deshayes C."/>
            <person name="Reyrat J.-M."/>
            <person name="Van Dorsselaer A."/>
            <person name="Poch O."/>
            <person name="Schaeffer C."/>
            <person name="Lecompte O."/>
        </authorList>
    </citation>
    <scope>NUCLEOTIDE SEQUENCE [LARGE SCALE GENOMIC DNA]</scope>
    <source>
        <strain>ATCC 700084 / mc(2)155</strain>
    </source>
</reference>
<reference key="4">
    <citation type="journal article" date="2005" name="Mol. Microbiol.">
        <title>An atypical type II topoisomerase from Mycobacterium smegmatis with positive supercoiling activity.</title>
        <authorList>
            <person name="Jain P."/>
            <person name="Nagaraja V."/>
        </authorList>
    </citation>
    <scope>FUNCTION</scope>
    <scope>REACTION MECHANISM</scope>
    <scope>CATALYTIC ACTIVITY</scope>
    <scope>COFACTOR</scope>
    <scope>ACTIVITY REGULATION</scope>
    <scope>SUBUNIT</scope>
    <source>
        <strain>ATCC 700084 / mc(2)155</strain>
    </source>
</reference>
<reference key="5">
    <citation type="journal article" date="2010" name="Mol. Biosyst.">
        <title>Expansion of the mycobacterial 'PUPylome'.</title>
        <authorList>
            <person name="Watrous J."/>
            <person name="Burns K."/>
            <person name="Liu W.T."/>
            <person name="Patel A."/>
            <person name="Hook V."/>
            <person name="Bafna V."/>
            <person name="Barry C.E. III"/>
            <person name="Bark S."/>
            <person name="Dorrestein P.C."/>
        </authorList>
    </citation>
    <scope>PUPYLATION AT LYS-429</scope>
    <scope>IDENTIFICATION BY MASS SPECTROMETRY</scope>
</reference>
<feature type="chain" id="PRO_0000396100" description="Topoisomerase subunit TopoN">
    <location>
        <begin position="1"/>
        <end position="698"/>
    </location>
</feature>
<feature type="domain" description="Toprim" evidence="1">
    <location>
        <begin position="479"/>
        <end position="593"/>
    </location>
</feature>
<feature type="region of interest" description="Disordered" evidence="2">
    <location>
        <begin position="443"/>
        <end position="473"/>
    </location>
</feature>
<feature type="cross-link" description="Isoglutamyl lysine isopeptide (Lys-Gln) (interchain with Q-Cter in protein Pup)" evidence="4">
    <location>
        <position position="429"/>
    </location>
</feature>
<name>TOPON_MYCS2</name>
<proteinExistence type="evidence at protein level"/>
<gene>
    <name evidence="5" type="primary">topoN</name>
    <name type="ordered locus">MSMEG_0457</name>
    <name type="ordered locus">MSMEI_0444</name>
</gene>
<organism>
    <name type="scientific">Mycolicibacterium smegmatis (strain ATCC 700084 / mc(2)155)</name>
    <name type="common">Mycobacterium smegmatis</name>
    <dbReference type="NCBI Taxonomy" id="246196"/>
    <lineage>
        <taxon>Bacteria</taxon>
        <taxon>Bacillati</taxon>
        <taxon>Actinomycetota</taxon>
        <taxon>Actinomycetes</taxon>
        <taxon>Mycobacteriales</taxon>
        <taxon>Mycobacteriaceae</taxon>
        <taxon>Mycolicibacterium</taxon>
    </lineage>
</organism>